<feature type="chain" id="PRO_1000136469" description="Phosphoenolpyruvate synthase regulatory protein">
    <location>
        <begin position="1"/>
        <end position="277"/>
    </location>
</feature>
<feature type="binding site" evidence="1">
    <location>
        <begin position="157"/>
        <end position="164"/>
    </location>
    <ligand>
        <name>ADP</name>
        <dbReference type="ChEBI" id="CHEBI:456216"/>
    </ligand>
</feature>
<comment type="function">
    <text evidence="1">Bifunctional serine/threonine kinase and phosphorylase involved in the regulation of the phosphoenolpyruvate synthase (PEPS) by catalyzing its phosphorylation/dephosphorylation.</text>
</comment>
<comment type="catalytic activity">
    <reaction evidence="1">
        <text>[pyruvate, water dikinase] + ADP = [pyruvate, water dikinase]-phosphate + AMP + H(+)</text>
        <dbReference type="Rhea" id="RHEA:46020"/>
        <dbReference type="Rhea" id="RHEA-COMP:11425"/>
        <dbReference type="Rhea" id="RHEA-COMP:11426"/>
        <dbReference type="ChEBI" id="CHEBI:15378"/>
        <dbReference type="ChEBI" id="CHEBI:43176"/>
        <dbReference type="ChEBI" id="CHEBI:68546"/>
        <dbReference type="ChEBI" id="CHEBI:456215"/>
        <dbReference type="ChEBI" id="CHEBI:456216"/>
        <dbReference type="EC" id="2.7.11.33"/>
    </reaction>
</comment>
<comment type="catalytic activity">
    <reaction evidence="1">
        <text>[pyruvate, water dikinase]-phosphate + phosphate + H(+) = [pyruvate, water dikinase] + diphosphate</text>
        <dbReference type="Rhea" id="RHEA:48580"/>
        <dbReference type="Rhea" id="RHEA-COMP:11425"/>
        <dbReference type="Rhea" id="RHEA-COMP:11426"/>
        <dbReference type="ChEBI" id="CHEBI:15378"/>
        <dbReference type="ChEBI" id="CHEBI:33019"/>
        <dbReference type="ChEBI" id="CHEBI:43176"/>
        <dbReference type="ChEBI" id="CHEBI:43474"/>
        <dbReference type="ChEBI" id="CHEBI:68546"/>
        <dbReference type="EC" id="2.7.4.28"/>
    </reaction>
</comment>
<comment type="similarity">
    <text evidence="1">Belongs to the pyruvate, phosphate/water dikinase regulatory protein family. PSRP subfamily.</text>
</comment>
<reference key="1">
    <citation type="journal article" date="2009" name="PLoS Genet.">
        <title>Organised genome dynamics in the Escherichia coli species results in highly diverse adaptive paths.</title>
        <authorList>
            <person name="Touchon M."/>
            <person name="Hoede C."/>
            <person name="Tenaillon O."/>
            <person name="Barbe V."/>
            <person name="Baeriswyl S."/>
            <person name="Bidet P."/>
            <person name="Bingen E."/>
            <person name="Bonacorsi S."/>
            <person name="Bouchier C."/>
            <person name="Bouvet O."/>
            <person name="Calteau A."/>
            <person name="Chiapello H."/>
            <person name="Clermont O."/>
            <person name="Cruveiller S."/>
            <person name="Danchin A."/>
            <person name="Diard M."/>
            <person name="Dossat C."/>
            <person name="Karoui M.E."/>
            <person name="Frapy E."/>
            <person name="Garry L."/>
            <person name="Ghigo J.M."/>
            <person name="Gilles A.M."/>
            <person name="Johnson J."/>
            <person name="Le Bouguenec C."/>
            <person name="Lescat M."/>
            <person name="Mangenot S."/>
            <person name="Martinez-Jehanne V."/>
            <person name="Matic I."/>
            <person name="Nassif X."/>
            <person name="Oztas S."/>
            <person name="Petit M.A."/>
            <person name="Pichon C."/>
            <person name="Rouy Z."/>
            <person name="Ruf C.S."/>
            <person name="Schneider D."/>
            <person name="Tourret J."/>
            <person name="Vacherie B."/>
            <person name="Vallenet D."/>
            <person name="Medigue C."/>
            <person name="Rocha E.P.C."/>
            <person name="Denamur E."/>
        </authorList>
    </citation>
    <scope>NUCLEOTIDE SEQUENCE [LARGE SCALE GENOMIC DNA]</scope>
    <source>
        <strain>IAI1</strain>
    </source>
</reference>
<gene>
    <name evidence="1" type="primary">ppsR</name>
    <name type="ordered locus">ECIAI1_1758</name>
</gene>
<keyword id="KW-0418">Kinase</keyword>
<keyword id="KW-0547">Nucleotide-binding</keyword>
<keyword id="KW-0723">Serine/threonine-protein kinase</keyword>
<keyword id="KW-0808">Transferase</keyword>
<protein>
    <recommendedName>
        <fullName evidence="1">Phosphoenolpyruvate synthase regulatory protein</fullName>
        <shortName evidence="1">PEP synthase regulatory protein</shortName>
        <shortName evidence="1">PSRP</shortName>
        <ecNumber evidence="1">2.7.11.33</ecNumber>
        <ecNumber evidence="1">2.7.4.28</ecNumber>
    </recommendedName>
    <alternativeName>
        <fullName evidence="1">Pyruvate, water dikinase regulatory protein</fullName>
    </alternativeName>
</protein>
<evidence type="ECO:0000255" key="1">
    <source>
        <dbReference type="HAMAP-Rule" id="MF_01062"/>
    </source>
</evidence>
<proteinExistence type="inferred from homology"/>
<sequence length="277" mass="31211">MDNAVDRHVFYISDGTAITAEVLGHAVMSQFPVTISSITLPFVENESRARAVKDQIDAIYHQTGVRPLVFYSIVLPEIRAIILQSEGFCQDIVQALVAPLQQEMKLDPTPIAHRTHGLNPNNLNKYDARIAAIDYTLAHDDGISLRNLDQAQVILLGVSRCGKTPTSLYLAMQFGIRAANYPFIADDMDNLVLPASLKPLQHKLFGLTIDPERLAAIREERRENSRYASLRQCRMEVAEVEALYRKNQIPWINSTNYSVEEIATKILDIMGLSRRMY</sequence>
<name>PSRP_ECO8A</name>
<accession>B7M1B1</accession>
<dbReference type="EC" id="2.7.11.33" evidence="1"/>
<dbReference type="EC" id="2.7.4.28" evidence="1"/>
<dbReference type="EMBL" id="CU928160">
    <property type="protein sequence ID" value="CAQ98615.1"/>
    <property type="molecule type" value="Genomic_DNA"/>
</dbReference>
<dbReference type="RefSeq" id="WP_000368046.1">
    <property type="nucleotide sequence ID" value="NC_011741.1"/>
</dbReference>
<dbReference type="SMR" id="B7M1B1"/>
<dbReference type="GeneID" id="93775866"/>
<dbReference type="KEGG" id="ecr:ECIAI1_1758"/>
<dbReference type="HOGENOM" id="CLU_046206_1_0_6"/>
<dbReference type="GO" id="GO:0043531">
    <property type="term" value="F:ADP binding"/>
    <property type="evidence" value="ECO:0007669"/>
    <property type="project" value="UniProtKB-UniRule"/>
</dbReference>
<dbReference type="GO" id="GO:0005524">
    <property type="term" value="F:ATP binding"/>
    <property type="evidence" value="ECO:0007669"/>
    <property type="project" value="InterPro"/>
</dbReference>
<dbReference type="GO" id="GO:0016776">
    <property type="term" value="F:phosphotransferase activity, phosphate group as acceptor"/>
    <property type="evidence" value="ECO:0007669"/>
    <property type="project" value="UniProtKB-UniRule"/>
</dbReference>
<dbReference type="GO" id="GO:0004674">
    <property type="term" value="F:protein serine/threonine kinase activity"/>
    <property type="evidence" value="ECO:0007669"/>
    <property type="project" value="UniProtKB-UniRule"/>
</dbReference>
<dbReference type="HAMAP" id="MF_01062">
    <property type="entry name" value="PSRP"/>
    <property type="match status" value="1"/>
</dbReference>
<dbReference type="InterPro" id="IPR005177">
    <property type="entry name" value="Kinase-pyrophosphorylase"/>
</dbReference>
<dbReference type="InterPro" id="IPR026530">
    <property type="entry name" value="PSRP"/>
</dbReference>
<dbReference type="NCBIfam" id="NF003742">
    <property type="entry name" value="PRK05339.1"/>
    <property type="match status" value="1"/>
</dbReference>
<dbReference type="PANTHER" id="PTHR31756">
    <property type="entry name" value="PYRUVATE, PHOSPHATE DIKINASE REGULATORY PROTEIN 1, CHLOROPLASTIC"/>
    <property type="match status" value="1"/>
</dbReference>
<dbReference type="PANTHER" id="PTHR31756:SF3">
    <property type="entry name" value="PYRUVATE, PHOSPHATE DIKINASE REGULATORY PROTEIN 1, CHLOROPLASTIC"/>
    <property type="match status" value="1"/>
</dbReference>
<dbReference type="Pfam" id="PF03618">
    <property type="entry name" value="Kinase-PPPase"/>
    <property type="match status" value="1"/>
</dbReference>
<organism>
    <name type="scientific">Escherichia coli O8 (strain IAI1)</name>
    <dbReference type="NCBI Taxonomy" id="585034"/>
    <lineage>
        <taxon>Bacteria</taxon>
        <taxon>Pseudomonadati</taxon>
        <taxon>Pseudomonadota</taxon>
        <taxon>Gammaproteobacteria</taxon>
        <taxon>Enterobacterales</taxon>
        <taxon>Enterobacteriaceae</taxon>
        <taxon>Escherichia</taxon>
    </lineage>
</organism>